<name>RR18_ORYSA</name>
<geneLocation type="chloroplast"/>
<accession>P0C475</accession>
<accession>P12152</accession>
<accession>Q6QXZ6</accession>
<accession>Q6QY60</accession>
<comment type="subunit">
    <text>Part of the 30S ribosomal subunit.</text>
</comment>
<comment type="subcellular location">
    <subcellularLocation>
        <location>Plastid</location>
        <location>Chloroplast</location>
    </subcellularLocation>
</comment>
<comment type="similarity">
    <text evidence="2">Belongs to the bacterial ribosomal protein bS18 family.</text>
</comment>
<evidence type="ECO:0000256" key="1">
    <source>
        <dbReference type="SAM" id="MobiDB-lite"/>
    </source>
</evidence>
<evidence type="ECO:0000305" key="2"/>
<organism>
    <name type="scientific">Oryza sativa</name>
    <name type="common">Rice</name>
    <dbReference type="NCBI Taxonomy" id="4530"/>
    <lineage>
        <taxon>Eukaryota</taxon>
        <taxon>Viridiplantae</taxon>
        <taxon>Streptophyta</taxon>
        <taxon>Embryophyta</taxon>
        <taxon>Tracheophyta</taxon>
        <taxon>Spermatophyta</taxon>
        <taxon>Magnoliopsida</taxon>
        <taxon>Liliopsida</taxon>
        <taxon>Poales</taxon>
        <taxon>Poaceae</taxon>
        <taxon>BOP clade</taxon>
        <taxon>Oryzoideae</taxon>
        <taxon>Oryzeae</taxon>
        <taxon>Oryzinae</taxon>
        <taxon>Oryza</taxon>
    </lineage>
</organism>
<gene>
    <name type="primary">rps18</name>
    <name type="ORF">PA088</name>
</gene>
<protein>
    <recommendedName>
        <fullName evidence="2">Small ribosomal subunit protein bS18c</fullName>
    </recommendedName>
    <alternativeName>
        <fullName>30S ribosomal protein S18, chloroplastic</fullName>
    </alternativeName>
</protein>
<proteinExistence type="inferred from homology"/>
<dbReference type="EMBL" id="AY522331">
    <property type="protein sequence ID" value="AAS46198.1"/>
    <property type="molecule type" value="Genomic_DNA"/>
</dbReference>
<dbReference type="RefSeq" id="YP_009305326.1">
    <property type="nucleotide sequence ID" value="NC_031333.1"/>
</dbReference>
<dbReference type="SMR" id="P0C475"/>
<dbReference type="GeneID" id="29141394"/>
<dbReference type="ExpressionAtlas" id="P0C475">
    <property type="expression patterns" value="baseline and differential"/>
</dbReference>
<dbReference type="GO" id="GO:0009507">
    <property type="term" value="C:chloroplast"/>
    <property type="evidence" value="ECO:0007669"/>
    <property type="project" value="UniProtKB-SubCell"/>
</dbReference>
<dbReference type="GO" id="GO:0005763">
    <property type="term" value="C:mitochondrial small ribosomal subunit"/>
    <property type="evidence" value="ECO:0007669"/>
    <property type="project" value="TreeGrafter"/>
</dbReference>
<dbReference type="GO" id="GO:0009536">
    <property type="term" value="C:plastid"/>
    <property type="evidence" value="ECO:0000305"/>
    <property type="project" value="Gramene"/>
</dbReference>
<dbReference type="GO" id="GO:0070181">
    <property type="term" value="F:small ribosomal subunit rRNA binding"/>
    <property type="evidence" value="ECO:0007669"/>
    <property type="project" value="TreeGrafter"/>
</dbReference>
<dbReference type="GO" id="GO:0003735">
    <property type="term" value="F:structural constituent of ribosome"/>
    <property type="evidence" value="ECO:0007669"/>
    <property type="project" value="InterPro"/>
</dbReference>
<dbReference type="GO" id="GO:0006412">
    <property type="term" value="P:translation"/>
    <property type="evidence" value="ECO:0007669"/>
    <property type="project" value="UniProtKB-UniRule"/>
</dbReference>
<dbReference type="FunFam" id="4.10.640.10:FF:000002">
    <property type="entry name" value="30S ribosomal protein S18, chloroplastic"/>
    <property type="match status" value="1"/>
</dbReference>
<dbReference type="Gene3D" id="4.10.640.10">
    <property type="entry name" value="Ribosomal protein S18"/>
    <property type="match status" value="1"/>
</dbReference>
<dbReference type="HAMAP" id="MF_00270">
    <property type="entry name" value="Ribosomal_bS18"/>
    <property type="match status" value="1"/>
</dbReference>
<dbReference type="InterPro" id="IPR001648">
    <property type="entry name" value="Ribosomal_bS18"/>
</dbReference>
<dbReference type="InterPro" id="IPR018275">
    <property type="entry name" value="Ribosomal_bS18_CS"/>
</dbReference>
<dbReference type="InterPro" id="IPR036870">
    <property type="entry name" value="Ribosomal_bS18_sf"/>
</dbReference>
<dbReference type="NCBIfam" id="TIGR00165">
    <property type="entry name" value="S18"/>
    <property type="match status" value="1"/>
</dbReference>
<dbReference type="PANTHER" id="PTHR13479">
    <property type="entry name" value="30S RIBOSOMAL PROTEIN S18"/>
    <property type="match status" value="1"/>
</dbReference>
<dbReference type="PANTHER" id="PTHR13479:SF40">
    <property type="entry name" value="SMALL RIBOSOMAL SUBUNIT PROTEIN BS18M"/>
    <property type="match status" value="1"/>
</dbReference>
<dbReference type="Pfam" id="PF01084">
    <property type="entry name" value="Ribosomal_S18"/>
    <property type="match status" value="1"/>
</dbReference>
<dbReference type="PRINTS" id="PR00974">
    <property type="entry name" value="RIBOSOMALS18"/>
</dbReference>
<dbReference type="SUPFAM" id="SSF46911">
    <property type="entry name" value="Ribosomal protein S18"/>
    <property type="match status" value="1"/>
</dbReference>
<dbReference type="PROSITE" id="PS00057">
    <property type="entry name" value="RIBOSOMAL_S18"/>
    <property type="match status" value="1"/>
</dbReference>
<reference key="1">
    <citation type="journal article" date="2004" name="Plant Physiol.">
        <title>A comparison of rice chloroplast genomes.</title>
        <authorList>
            <person name="Tang J."/>
            <person name="Xia H."/>
            <person name="Cao M."/>
            <person name="Zhang X."/>
            <person name="Zeng W."/>
            <person name="Hu S."/>
            <person name="Tong W."/>
            <person name="Wang J."/>
            <person name="Wang J."/>
            <person name="Yu J."/>
            <person name="Yang H."/>
            <person name="Zhu L."/>
        </authorList>
    </citation>
    <scope>NUCLEOTIDE SEQUENCE [LARGE SCALE GENOMIC DNA]</scope>
    <source>
        <strain>cv. PA64s</strain>
    </source>
</reference>
<keyword id="KW-0150">Chloroplast</keyword>
<keyword id="KW-0934">Plastid</keyword>
<keyword id="KW-0677">Repeat</keyword>
<keyword id="KW-0687">Ribonucleoprotein</keyword>
<keyword id="KW-0689">Ribosomal protein</keyword>
<keyword id="KW-0694">RNA-binding</keyword>
<keyword id="KW-0699">rRNA-binding</keyword>
<sequence length="163" mass="19656">MYTSKQPFHKSKQTFHKSKQTFRKSKQTFRKFKQPFRKPKQPFRRRPRIGPGDRIDYRNMSLINRFISEQGKILSRRINRLTLKQQRLITLAIKQARILSFLPFRNYENEKQFQAQSISIITGPRPRKNRHIPPLTQKFNSNRNLRNSNQTLRNNNRNLSSDC</sequence>
<feature type="chain" id="PRO_0000111300" description="Small ribosomal subunit protein bS18c">
    <location>
        <begin position="1"/>
        <end position="163"/>
    </location>
</feature>
<feature type="repeat">
    <location>
        <begin position="4"/>
        <end position="10"/>
    </location>
</feature>
<feature type="repeat">
    <location>
        <begin position="11"/>
        <end position="17"/>
    </location>
</feature>
<feature type="repeat">
    <location>
        <begin position="18"/>
        <end position="24"/>
    </location>
</feature>
<feature type="repeat">
    <location>
        <begin position="25"/>
        <end position="31"/>
    </location>
</feature>
<feature type="repeat">
    <location>
        <begin position="32"/>
        <end position="38"/>
    </location>
</feature>
<feature type="repeat">
    <location>
        <begin position="39"/>
        <end position="45"/>
    </location>
</feature>
<feature type="region of interest" description="Disordered" evidence="1">
    <location>
        <begin position="1"/>
        <end position="54"/>
    </location>
</feature>
<feature type="region of interest" description="6 X 7 AA tandem repeats">
    <location>
        <begin position="4"/>
        <end position="52"/>
    </location>
</feature>
<feature type="region of interest" description="Disordered" evidence="1">
    <location>
        <begin position="121"/>
        <end position="163"/>
    </location>
</feature>
<feature type="compositionally biased region" description="Basic residues" evidence="1">
    <location>
        <begin position="7"/>
        <end position="48"/>
    </location>
</feature>
<feature type="compositionally biased region" description="Low complexity" evidence="1">
    <location>
        <begin position="140"/>
        <end position="163"/>
    </location>
</feature>